<protein>
    <recommendedName>
        <fullName evidence="1">NADPH-dependent 7-cyano-7-deazaguanine reductase</fullName>
        <ecNumber evidence="1">1.7.1.13</ecNumber>
    </recommendedName>
    <alternativeName>
        <fullName evidence="1">7-cyano-7-carbaguanine reductase</fullName>
    </alternativeName>
    <alternativeName>
        <fullName evidence="1">NADPH-dependent nitrile oxidoreductase</fullName>
    </alternativeName>
    <alternativeName>
        <fullName evidence="1">PreQ(0) reductase</fullName>
    </alternativeName>
</protein>
<name>QUEF_BURCH</name>
<comment type="function">
    <text evidence="1">Catalyzes the NADPH-dependent reduction of 7-cyano-7-deazaguanine (preQ0) to 7-aminomethyl-7-deazaguanine (preQ1).</text>
</comment>
<comment type="catalytic activity">
    <reaction evidence="1">
        <text>7-aminomethyl-7-carbaguanine + 2 NADP(+) = 7-cyano-7-deazaguanine + 2 NADPH + 3 H(+)</text>
        <dbReference type="Rhea" id="RHEA:13409"/>
        <dbReference type="ChEBI" id="CHEBI:15378"/>
        <dbReference type="ChEBI" id="CHEBI:45075"/>
        <dbReference type="ChEBI" id="CHEBI:57783"/>
        <dbReference type="ChEBI" id="CHEBI:58349"/>
        <dbReference type="ChEBI" id="CHEBI:58703"/>
        <dbReference type="EC" id="1.7.1.13"/>
    </reaction>
</comment>
<comment type="pathway">
    <text evidence="1">tRNA modification; tRNA-queuosine biosynthesis.</text>
</comment>
<comment type="subunit">
    <text evidence="1">Homodimer.</text>
</comment>
<comment type="subcellular location">
    <subcellularLocation>
        <location evidence="1">Cytoplasm</location>
    </subcellularLocation>
</comment>
<comment type="similarity">
    <text evidence="1">Belongs to the GTP cyclohydrolase I family. QueF type 2 subfamily.</text>
</comment>
<organism>
    <name type="scientific">Burkholderia cenocepacia (strain HI2424)</name>
    <dbReference type="NCBI Taxonomy" id="331272"/>
    <lineage>
        <taxon>Bacteria</taxon>
        <taxon>Pseudomonadati</taxon>
        <taxon>Pseudomonadota</taxon>
        <taxon>Betaproteobacteria</taxon>
        <taxon>Burkholderiales</taxon>
        <taxon>Burkholderiaceae</taxon>
        <taxon>Burkholderia</taxon>
        <taxon>Burkholderia cepacia complex</taxon>
    </lineage>
</organism>
<sequence>MNPEHSPLGKATVYAAQYDASLLFPIPRAGAREQLGITSALPFFGTDIWNAYELSWLNARGKPQVAIATFYVPAESPNIVESKSFKLYLGSFAQSKFDSVDAVRDVLKRDVSAACGASVSVQLVSPHDFAKLEMDELDGLSLDRLDLDTDVYEPDPSLLSAADGENEAPVEETLVSDLLRSNCPVTGQPDWGSVQIHYVGPQIDHAGLLRYIISFRNHTGFHEQCVERIFLDILHACKPVKLAVYARYTRRGGLDINPFRTNYNQPMPDNARTARQ</sequence>
<reference key="1">
    <citation type="submission" date="2006-08" db="EMBL/GenBank/DDBJ databases">
        <title>Complete sequence of chromosome 1 of Burkholderia cenocepacia HI2424.</title>
        <authorList>
            <person name="Copeland A."/>
            <person name="Lucas S."/>
            <person name="Lapidus A."/>
            <person name="Barry K."/>
            <person name="Detter J.C."/>
            <person name="Glavina del Rio T."/>
            <person name="Hammon N."/>
            <person name="Israni S."/>
            <person name="Pitluck S."/>
            <person name="Chain P."/>
            <person name="Malfatti S."/>
            <person name="Shin M."/>
            <person name="Vergez L."/>
            <person name="Schmutz J."/>
            <person name="Larimer F."/>
            <person name="Land M."/>
            <person name="Hauser L."/>
            <person name="Kyrpides N."/>
            <person name="Kim E."/>
            <person name="LiPuma J.J."/>
            <person name="Gonzalez C.F."/>
            <person name="Konstantinidis K."/>
            <person name="Tiedje J.M."/>
            <person name="Richardson P."/>
        </authorList>
    </citation>
    <scope>NUCLEOTIDE SEQUENCE [LARGE SCALE GENOMIC DNA]</scope>
    <source>
        <strain>HI2424</strain>
    </source>
</reference>
<keyword id="KW-0963">Cytoplasm</keyword>
<keyword id="KW-0521">NADP</keyword>
<keyword id="KW-0560">Oxidoreductase</keyword>
<keyword id="KW-0671">Queuosine biosynthesis</keyword>
<dbReference type="EC" id="1.7.1.13" evidence="1"/>
<dbReference type="EMBL" id="CP000458">
    <property type="protein sequence ID" value="ABK09487.1"/>
    <property type="molecule type" value="Genomic_DNA"/>
</dbReference>
<dbReference type="RefSeq" id="WP_011546193.1">
    <property type="nucleotide sequence ID" value="NC_008542.1"/>
</dbReference>
<dbReference type="SMR" id="A0KAG0"/>
<dbReference type="KEGG" id="bch:Bcen2424_2737"/>
<dbReference type="HOGENOM" id="CLU_054738_0_0_4"/>
<dbReference type="UniPathway" id="UPA00392"/>
<dbReference type="GO" id="GO:0005737">
    <property type="term" value="C:cytoplasm"/>
    <property type="evidence" value="ECO:0007669"/>
    <property type="project" value="UniProtKB-SubCell"/>
</dbReference>
<dbReference type="GO" id="GO:0033739">
    <property type="term" value="F:preQ1 synthase activity"/>
    <property type="evidence" value="ECO:0007669"/>
    <property type="project" value="UniProtKB-UniRule"/>
</dbReference>
<dbReference type="GO" id="GO:0008616">
    <property type="term" value="P:queuosine biosynthetic process"/>
    <property type="evidence" value="ECO:0007669"/>
    <property type="project" value="UniProtKB-UniRule"/>
</dbReference>
<dbReference type="GO" id="GO:0006400">
    <property type="term" value="P:tRNA modification"/>
    <property type="evidence" value="ECO:0007669"/>
    <property type="project" value="UniProtKB-UniRule"/>
</dbReference>
<dbReference type="Gene3D" id="3.30.1130.10">
    <property type="match status" value="2"/>
</dbReference>
<dbReference type="HAMAP" id="MF_00817">
    <property type="entry name" value="QueF_type2"/>
    <property type="match status" value="1"/>
</dbReference>
<dbReference type="InterPro" id="IPR043133">
    <property type="entry name" value="GTP-CH-I_C/QueF"/>
</dbReference>
<dbReference type="InterPro" id="IPR050084">
    <property type="entry name" value="NADPH_dep_7-cyano-7-deazaG_red"/>
</dbReference>
<dbReference type="InterPro" id="IPR029500">
    <property type="entry name" value="QueF"/>
</dbReference>
<dbReference type="InterPro" id="IPR029139">
    <property type="entry name" value="QueF_N"/>
</dbReference>
<dbReference type="InterPro" id="IPR016428">
    <property type="entry name" value="QueF_type2"/>
</dbReference>
<dbReference type="NCBIfam" id="TIGR03138">
    <property type="entry name" value="QueF"/>
    <property type="match status" value="1"/>
</dbReference>
<dbReference type="PANTHER" id="PTHR34354">
    <property type="entry name" value="NADPH-DEPENDENT 7-CYANO-7-DEAZAGUANINE REDUCTASE"/>
    <property type="match status" value="1"/>
</dbReference>
<dbReference type="PANTHER" id="PTHR34354:SF1">
    <property type="entry name" value="NADPH-DEPENDENT 7-CYANO-7-DEAZAGUANINE REDUCTASE"/>
    <property type="match status" value="1"/>
</dbReference>
<dbReference type="Pfam" id="PF14489">
    <property type="entry name" value="QueF"/>
    <property type="match status" value="1"/>
</dbReference>
<dbReference type="Pfam" id="PF14819">
    <property type="entry name" value="QueF_N"/>
    <property type="match status" value="1"/>
</dbReference>
<dbReference type="PIRSF" id="PIRSF004750">
    <property type="entry name" value="Nitrile_oxidored_YqcD_prd"/>
    <property type="match status" value="1"/>
</dbReference>
<dbReference type="SUPFAM" id="SSF55620">
    <property type="entry name" value="Tetrahydrobiopterin biosynthesis enzymes-like"/>
    <property type="match status" value="1"/>
</dbReference>
<gene>
    <name evidence="1" type="primary">queF</name>
    <name type="ordered locus">Bcen2424_2737</name>
</gene>
<feature type="chain" id="PRO_1000062328" description="NADPH-dependent 7-cyano-7-deazaguanine reductase">
    <location>
        <begin position="1"/>
        <end position="276"/>
    </location>
</feature>
<feature type="active site" description="Thioimide intermediate" evidence="1">
    <location>
        <position position="183"/>
    </location>
</feature>
<feature type="active site" description="Proton donor" evidence="1">
    <location>
        <position position="190"/>
    </location>
</feature>
<feature type="binding site" evidence="1">
    <location>
        <begin position="80"/>
        <end position="82"/>
    </location>
    <ligand>
        <name>substrate</name>
    </ligand>
</feature>
<feature type="binding site" evidence="1">
    <location>
        <begin position="82"/>
        <end position="83"/>
    </location>
    <ligand>
        <name>NADPH</name>
        <dbReference type="ChEBI" id="CHEBI:57783"/>
    </ligand>
</feature>
<feature type="binding site" evidence="1">
    <location>
        <begin position="222"/>
        <end position="223"/>
    </location>
    <ligand>
        <name>substrate</name>
    </ligand>
</feature>
<feature type="binding site" evidence="1">
    <location>
        <begin position="251"/>
        <end position="252"/>
    </location>
    <ligand>
        <name>NADPH</name>
        <dbReference type="ChEBI" id="CHEBI:57783"/>
    </ligand>
</feature>
<accession>A0KAG0</accession>
<proteinExistence type="inferred from homology"/>
<evidence type="ECO:0000255" key="1">
    <source>
        <dbReference type="HAMAP-Rule" id="MF_00817"/>
    </source>
</evidence>